<organism>
    <name type="scientific">Neocamarosporium betae</name>
    <name type="common">Beet black rot fungus</name>
    <name type="synonym">Pleospora betae</name>
    <dbReference type="NCBI Taxonomy" id="1979465"/>
    <lineage>
        <taxon>Eukaryota</taxon>
        <taxon>Fungi</taxon>
        <taxon>Dikarya</taxon>
        <taxon>Ascomycota</taxon>
        <taxon>Pezizomycotina</taxon>
        <taxon>Dothideomycetes</taxon>
        <taxon>Pleosporomycetidae</taxon>
        <taxon>Pleosporales</taxon>
        <taxon>Pleosporineae</taxon>
        <taxon>Pleosporaceae</taxon>
        <taxon>Neocamarosporium</taxon>
    </lineage>
</organism>
<gene>
    <name evidence="6" type="primary">orf1</name>
</gene>
<comment type="function">
    <text evidence="1 5">FAD-linked oxidoreductase; part of the gene cluster that mediates the biosynthesis of betaenones, phytotoxic polyketides involved in leaf spot disease in sugar beets (PubMed:25530455). The first step of the pathway is the synthesis of dehydroprobetaenone I by the polyketide synthase bet1 and the enoyl reductase bet3 via condensation of one acetyl-CoA starter unit with 7 malonyl-CoA units and 5 methylations (PubMed:25530455). The C-terminal reductase (R) domain of bet1 catalyzes the reductive release of the polyketide chain (PubMed:25530455). Because bet1 lacks a designated enoylreductase (ER) domain, the required activity is provided the enoyl reductase bet3 (PubMed:25530455). The short-chain dehydrogenase/reductase bet4 then catalyzes reduction of dehydroprobetaenone I to probetaenone I (PubMed:25530455). The cytochrome P450 monooxygenase bet2 catalyzes successive epoxidation, oxidation (resulting from epoxide opening) and hydroxylation to install a tertiary alcohol in the decaline ring to yield betaenone C from dehydroprobetaenone I and betaenone B from probetaenone I (PubMed:25530455). The FAD-linked oxidoreductase (orf1) is probably responsible for the conversion of betaenone C to betaenone A via an intramolecular aldol reaction between C-1 and C-17 to form the bridged tricyclic system in betaenone A (By similarity).</text>
</comment>
<comment type="catalytic activity">
    <reaction evidence="1">
        <text>betaenone C = betaenone A</text>
        <dbReference type="Rhea" id="RHEA:61896"/>
        <dbReference type="ChEBI" id="CHEBI:145053"/>
        <dbReference type="ChEBI" id="CHEBI:145055"/>
    </reaction>
    <physiologicalReaction direction="left-to-right" evidence="1">
        <dbReference type="Rhea" id="RHEA:61897"/>
    </physiologicalReaction>
</comment>
<comment type="pathway">
    <text evidence="5">Mycotoxin biosynthesis.</text>
</comment>
<comment type="similarity">
    <text evidence="7">Belongs to the oxygen-dependent FAD-linked oxidoreductase family.</text>
</comment>
<feature type="signal peptide" evidence="2">
    <location>
        <begin position="1"/>
        <end position="17"/>
    </location>
</feature>
<feature type="chain" id="PRO_5002199092" description="FAD-linked oxidoreductase orf1">
    <location>
        <begin position="18"/>
        <end position="586"/>
    </location>
</feature>
<feature type="domain" description="FAD-binding PCMH-type" evidence="4">
    <location>
        <begin position="124"/>
        <end position="303"/>
    </location>
</feature>
<feature type="glycosylation site" description="N-linked (GlcNAc...) asparagine" evidence="3">
    <location>
        <position position="29"/>
    </location>
</feature>
<feature type="glycosylation site" description="N-linked (GlcNAc...) asparagine" evidence="3">
    <location>
        <position position="51"/>
    </location>
</feature>
<feature type="glycosylation site" description="N-linked (GlcNAc...) asparagine" evidence="3">
    <location>
        <position position="79"/>
    </location>
</feature>
<feature type="glycosylation site" description="N-linked (GlcNAc...) asparagine" evidence="3">
    <location>
        <position position="110"/>
    </location>
</feature>
<feature type="glycosylation site" description="N-linked (GlcNAc...) asparagine" evidence="3">
    <location>
        <position position="146"/>
    </location>
</feature>
<feature type="glycosylation site" description="N-linked (GlcNAc...) asparagine" evidence="3">
    <location>
        <position position="188"/>
    </location>
</feature>
<feature type="glycosylation site" description="N-linked (GlcNAc...) asparagine" evidence="3">
    <location>
        <position position="314"/>
    </location>
</feature>
<feature type="glycosylation site" description="N-linked (GlcNAc...) asparagine" evidence="3">
    <location>
        <position position="321"/>
    </location>
</feature>
<feature type="glycosylation site" description="N-linked (GlcNAc...) asparagine" evidence="3">
    <location>
        <position position="358"/>
    </location>
</feature>
<feature type="glycosylation site" description="N-linked (GlcNAc...) asparagine" evidence="3">
    <location>
        <position position="402"/>
    </location>
</feature>
<feature type="glycosylation site" description="N-linked (GlcNAc...) asparagine" evidence="3">
    <location>
        <position position="434"/>
    </location>
</feature>
<feature type="glycosylation site" description="N-linked (GlcNAc...) asparagine" evidence="3">
    <location>
        <position position="461"/>
    </location>
</feature>
<protein>
    <recommendedName>
        <fullName evidence="6">FAD-linked oxidoreductase orf1</fullName>
        <ecNumber evidence="1">1.-.-.-</ecNumber>
    </recommendedName>
    <alternativeName>
        <fullName evidence="6">Betaenone biosynthesis cluster protein B</fullName>
    </alternativeName>
    <alternativeName>
        <fullName evidence="1">FAD-dependent BBE enzyme-like protein</fullName>
    </alternativeName>
</protein>
<name>BET5_NEOBT</name>
<reference key="1">
    <citation type="journal article" date="2015" name="Chem. Commun. (Camb.)">
        <title>Heterologous expression of highly reducing polyketide synthase involved in betaenone biosynthesis.</title>
        <authorList>
            <person name="Ugai T."/>
            <person name="Minami A."/>
            <person name="Fujii R."/>
            <person name="Tanaka M."/>
            <person name="Oguri H."/>
            <person name="Gomi K."/>
            <person name="Oikawa H."/>
        </authorList>
    </citation>
    <scope>NUCLEOTIDE SEQUENCE [GENOMIC DNA]</scope>
</reference>
<proteinExistence type="inferred from homology"/>
<dbReference type="EC" id="1.-.-.-" evidence="1"/>
<dbReference type="EMBL" id="LC011911">
    <property type="protein sequence ID" value="BAQ25462.1"/>
    <property type="molecule type" value="Genomic_DNA"/>
</dbReference>
<dbReference type="SMR" id="A0A0C6E5D0"/>
<dbReference type="GlyCosmos" id="A0A0C6E5D0">
    <property type="glycosylation" value="12 sites, No reported glycans"/>
</dbReference>
<dbReference type="GO" id="GO:0071949">
    <property type="term" value="F:FAD binding"/>
    <property type="evidence" value="ECO:0007669"/>
    <property type="project" value="InterPro"/>
</dbReference>
<dbReference type="GO" id="GO:0016491">
    <property type="term" value="F:oxidoreductase activity"/>
    <property type="evidence" value="ECO:0007669"/>
    <property type="project" value="UniProtKB-KW"/>
</dbReference>
<dbReference type="Gene3D" id="3.30.465.10">
    <property type="match status" value="1"/>
</dbReference>
<dbReference type="Gene3D" id="3.40.462.20">
    <property type="match status" value="1"/>
</dbReference>
<dbReference type="InterPro" id="IPR012951">
    <property type="entry name" value="BBE"/>
</dbReference>
<dbReference type="InterPro" id="IPR016166">
    <property type="entry name" value="FAD-bd_PCMH"/>
</dbReference>
<dbReference type="InterPro" id="IPR036318">
    <property type="entry name" value="FAD-bd_PCMH-like_sf"/>
</dbReference>
<dbReference type="InterPro" id="IPR016169">
    <property type="entry name" value="FAD-bd_PCMH_sub2"/>
</dbReference>
<dbReference type="InterPro" id="IPR050432">
    <property type="entry name" value="FAD-linked_Oxidoreductases_BP"/>
</dbReference>
<dbReference type="InterPro" id="IPR006094">
    <property type="entry name" value="Oxid_FAD_bind_N"/>
</dbReference>
<dbReference type="PANTHER" id="PTHR13878:SF91">
    <property type="entry name" value="FAD BINDING DOMAIN PROTEIN (AFU_ORTHOLOGUE AFUA_6G12070)-RELATED"/>
    <property type="match status" value="1"/>
</dbReference>
<dbReference type="PANTHER" id="PTHR13878">
    <property type="entry name" value="GULONOLACTONE OXIDASE"/>
    <property type="match status" value="1"/>
</dbReference>
<dbReference type="Pfam" id="PF08031">
    <property type="entry name" value="BBE"/>
    <property type="match status" value="1"/>
</dbReference>
<dbReference type="Pfam" id="PF01565">
    <property type="entry name" value="FAD_binding_4"/>
    <property type="match status" value="1"/>
</dbReference>
<dbReference type="SUPFAM" id="SSF56176">
    <property type="entry name" value="FAD-binding/transporter-associated domain-like"/>
    <property type="match status" value="1"/>
</dbReference>
<dbReference type="PROSITE" id="PS51387">
    <property type="entry name" value="FAD_PCMH"/>
    <property type="match status" value="1"/>
</dbReference>
<keyword id="KW-0274">FAD</keyword>
<keyword id="KW-0285">Flavoprotein</keyword>
<keyword id="KW-0325">Glycoprotein</keyword>
<keyword id="KW-0560">Oxidoreductase</keyword>
<keyword id="KW-0732">Signal</keyword>
<accession>A0A0C6E5D0</accession>
<sequence>MKSFATTVLLVTPGIYAAALSGRQGQAINSSCKVIPGDTAWPSRQIWSQLNDTLDGRLIQSTPQAAVCRPGGYGSISENGTECTTLKEDWDYAKAFLDSAVEIMNPWYQNTSCSPFYRVDQPCTLGNYVSYAIPVSGPEDVVTAINFTQTHNVRLVIKNTGHDYLGKSTGTGGLSLWTHNLQSKQIVNYTSPAYSGPAIKVGAGVTGGEALLHASQFGYRLVSGDCSTVGYAGGYSSGGGHSLLNSVHGMAADNVLEWEVVTADGRHLVASATQNSDLYWALSGGGAGNLAVVLSMTAKVHPDGLVGAATLSFNATSSPSNTSYISAINAWWTFLPTLIDAGASPSFNIYTNNFLIYNTTAPGKSAQDMSTLYAPYLSTLSSLSIPYTFQTYTAPSFLQHYNATDGPLPYGPYVASQLFNSRMIPRSLSSSPSNLTTAILSSVATDAPGIWQLGCLGINVNSTRISHPDNAVAPHWRTAMAVCLEFSLYDWAIPEEEMVARRQHLADVIHPAIVKVTPGSGAYLNEADPLVYPVGEDGWKDAFYGANYERLRGLKREWDPERVFYAYTAPGSEEWVSDAEGRLCRV</sequence>
<evidence type="ECO:0000250" key="1">
    <source>
        <dbReference type="UniProtKB" id="Q0UK53"/>
    </source>
</evidence>
<evidence type="ECO:0000255" key="2"/>
<evidence type="ECO:0000255" key="3">
    <source>
        <dbReference type="PROSITE-ProRule" id="PRU00498"/>
    </source>
</evidence>
<evidence type="ECO:0000255" key="4">
    <source>
        <dbReference type="PROSITE-ProRule" id="PRU00718"/>
    </source>
</evidence>
<evidence type="ECO:0000269" key="5">
    <source>
    </source>
</evidence>
<evidence type="ECO:0000303" key="6">
    <source>
    </source>
</evidence>
<evidence type="ECO:0000305" key="7"/>